<reference key="1">
    <citation type="journal article" date="2005" name="Proc. Natl. Acad. Sci. U.S.A.">
        <title>The complete genome sequence of Mycobacterium avium subspecies paratuberculosis.</title>
        <authorList>
            <person name="Li L."/>
            <person name="Bannantine J.P."/>
            <person name="Zhang Q."/>
            <person name="Amonsin A."/>
            <person name="May B.J."/>
            <person name="Alt D."/>
            <person name="Banerji N."/>
            <person name="Kanjilal S."/>
            <person name="Kapur V."/>
        </authorList>
    </citation>
    <scope>NUCLEOTIDE SEQUENCE [LARGE SCALE GENOMIC DNA]</scope>
    <source>
        <strain>ATCC BAA-968 / K-10</strain>
    </source>
</reference>
<evidence type="ECO:0000255" key="1">
    <source>
        <dbReference type="HAMAP-Rule" id="MF_00452"/>
    </source>
</evidence>
<keyword id="KW-0963">Cytoplasm</keyword>
<keyword id="KW-0210">Decarboxylase</keyword>
<keyword id="KW-0312">Gluconeogenesis</keyword>
<keyword id="KW-0342">GTP-binding</keyword>
<keyword id="KW-0456">Lyase</keyword>
<keyword id="KW-0464">Manganese</keyword>
<keyword id="KW-0479">Metal-binding</keyword>
<keyword id="KW-0547">Nucleotide-binding</keyword>
<keyword id="KW-1185">Reference proteome</keyword>
<name>PCKG_MYCPA</name>
<sequence length="609" mass="67659">MTSATIPGLDTAPTNHQGLLSWVQEVAELTQPDRVVFADGSDEEFNRLAAELVEAGTLKKLNEKKHPNSYLALSDPSDVARVESRTYICTEEESGAGPTNNWMDPTEMRSIMTDLYRGCMRGRTMWVVPFCMGPLGVEDPKLGVEITDSEYVVISMKVMTRMGKAALEKMGDDGFFVKALHSVGAPLEPGQKDVPWPCNDTKYITHFPETREIWSYGSGYGGNALLGKKCYSLRIASAMAHDEGWLAEHMLILKLISPENKAYYFAAAFPSACGKTNLAMLQPTIPGWRAETLGDDIAWMRFGKDGRLYAVNPEFGFFGVAPGTNWKSNPNAMRTIEAGNTVFTNVALTDDNDVWWEGLEGQPEHLIDWKGNDWYAGKTETPAAHPNSRYCTPMSQCPILAPEWDDPQGVPISGILFGARRKTTVPLVTQARDWQHGVFMGATMGSEQTAAAEGKVGTVRRDPMAMLPFLGYHVGDYFQHWIDLGKNSDESKLPKVFFVNWFRRGDDGGFLWPGFGENSRVLKWIVDRIEHKAGGQDTPIGIVPKAEDLDLDGLDVSVDDVAKALAVNPDEWREELPQIEEWFEFVGEKLPTGVRDEFEALKQRLSEAG</sequence>
<feature type="chain" id="PRO_0000103609" description="Phosphoenolpyruvate carboxykinase [GTP]">
    <location>
        <begin position="1"/>
        <end position="609"/>
    </location>
</feature>
<feature type="active site" evidence="1">
    <location>
        <position position="273"/>
    </location>
</feature>
<feature type="binding site" evidence="1">
    <location>
        <position position="81"/>
    </location>
    <ligand>
        <name>substrate</name>
    </ligand>
</feature>
<feature type="binding site" evidence="1">
    <location>
        <begin position="220"/>
        <end position="222"/>
    </location>
    <ligand>
        <name>substrate</name>
    </ligand>
</feature>
<feature type="binding site" evidence="1">
    <location>
        <position position="229"/>
    </location>
    <ligand>
        <name>Mn(2+)</name>
        <dbReference type="ChEBI" id="CHEBI:29035"/>
    </ligand>
</feature>
<feature type="binding site" evidence="1">
    <location>
        <position position="249"/>
    </location>
    <ligand>
        <name>Mn(2+)</name>
        <dbReference type="ChEBI" id="CHEBI:29035"/>
    </ligand>
</feature>
<feature type="binding site" evidence="1">
    <location>
        <position position="271"/>
    </location>
    <ligand>
        <name>substrate</name>
    </ligand>
</feature>
<feature type="binding site" evidence="1">
    <location>
        <begin position="272"/>
        <end position="277"/>
    </location>
    <ligand>
        <name>GTP</name>
        <dbReference type="ChEBI" id="CHEBI:37565"/>
    </ligand>
</feature>
<feature type="binding site" evidence="1">
    <location>
        <position position="296"/>
    </location>
    <ligand>
        <name>Mn(2+)</name>
        <dbReference type="ChEBI" id="CHEBI:29035"/>
    </ligand>
</feature>
<feature type="binding site" evidence="1">
    <location>
        <begin position="387"/>
        <end position="389"/>
    </location>
    <ligand>
        <name>substrate</name>
    </ligand>
</feature>
<feature type="binding site" evidence="1">
    <location>
        <position position="389"/>
    </location>
    <ligand>
        <name>GTP</name>
        <dbReference type="ChEBI" id="CHEBI:37565"/>
    </ligand>
</feature>
<feature type="binding site" evidence="1">
    <location>
        <position position="420"/>
    </location>
    <ligand>
        <name>GTP</name>
        <dbReference type="ChEBI" id="CHEBI:37565"/>
    </ligand>
</feature>
<feature type="binding site" evidence="1">
    <location>
        <begin position="515"/>
        <end position="518"/>
    </location>
    <ligand>
        <name>GTP</name>
        <dbReference type="ChEBI" id="CHEBI:37565"/>
    </ligand>
</feature>
<comment type="function">
    <text evidence="1">Catalyzes the conversion of oxaloacetate (OAA) to phosphoenolpyruvate (PEP), the rate-limiting step in the metabolic pathway that produces glucose from lactate and other precursors derived from the citric acid cycle.</text>
</comment>
<comment type="catalytic activity">
    <reaction evidence="1">
        <text>oxaloacetate + GTP = phosphoenolpyruvate + GDP + CO2</text>
        <dbReference type="Rhea" id="RHEA:10388"/>
        <dbReference type="ChEBI" id="CHEBI:16452"/>
        <dbReference type="ChEBI" id="CHEBI:16526"/>
        <dbReference type="ChEBI" id="CHEBI:37565"/>
        <dbReference type="ChEBI" id="CHEBI:58189"/>
        <dbReference type="ChEBI" id="CHEBI:58702"/>
        <dbReference type="EC" id="4.1.1.32"/>
    </reaction>
</comment>
<comment type="cofactor">
    <cofactor evidence="1">
        <name>Mn(2+)</name>
        <dbReference type="ChEBI" id="CHEBI:29035"/>
    </cofactor>
    <text evidence="1">Binds 1 Mn(2+) ion per subunit.</text>
</comment>
<comment type="pathway">
    <text evidence="1">Carbohydrate biosynthesis; gluconeogenesis.</text>
</comment>
<comment type="subunit">
    <text evidence="1">Monomer.</text>
</comment>
<comment type="subcellular location">
    <subcellularLocation>
        <location evidence="1">Cytoplasm</location>
    </subcellularLocation>
</comment>
<comment type="similarity">
    <text evidence="1">Belongs to the phosphoenolpyruvate carboxykinase [GTP] family.</text>
</comment>
<gene>
    <name evidence="1" type="primary">pckG</name>
    <name type="ordered locus">MAP_3646</name>
</gene>
<protein>
    <recommendedName>
        <fullName evidence="1">Phosphoenolpyruvate carboxykinase [GTP]</fullName>
        <shortName evidence="1">PEP carboxykinase</shortName>
        <shortName evidence="1">PEPCK</shortName>
        <ecNumber evidence="1">4.1.1.32</ecNumber>
    </recommendedName>
</protein>
<organism>
    <name type="scientific">Mycolicibacterium paratuberculosis (strain ATCC BAA-968 / K-10)</name>
    <name type="common">Mycobacterium paratuberculosis</name>
    <dbReference type="NCBI Taxonomy" id="262316"/>
    <lineage>
        <taxon>Bacteria</taxon>
        <taxon>Bacillati</taxon>
        <taxon>Actinomycetota</taxon>
        <taxon>Actinomycetes</taxon>
        <taxon>Mycobacteriales</taxon>
        <taxon>Mycobacteriaceae</taxon>
        <taxon>Mycobacterium</taxon>
        <taxon>Mycobacterium avium complex (MAC)</taxon>
    </lineage>
</organism>
<accession>Q73TS2</accession>
<proteinExistence type="inferred from homology"/>
<dbReference type="EC" id="4.1.1.32" evidence="1"/>
<dbReference type="EMBL" id="AE016958">
    <property type="protein sequence ID" value="AAS06196.1"/>
    <property type="molecule type" value="Genomic_DNA"/>
</dbReference>
<dbReference type="RefSeq" id="WP_010950048.1">
    <property type="nucleotide sequence ID" value="NZ_CP106873.1"/>
</dbReference>
<dbReference type="SMR" id="Q73TS2"/>
<dbReference type="STRING" id="262316.MAP_3646"/>
<dbReference type="KEGG" id="mpa:MAP_3646"/>
<dbReference type="PATRIC" id="fig|262316.17.peg.3875"/>
<dbReference type="eggNOG" id="COG1274">
    <property type="taxonomic scope" value="Bacteria"/>
</dbReference>
<dbReference type="HOGENOM" id="CLU_028872_1_1_11"/>
<dbReference type="UniPathway" id="UPA00138"/>
<dbReference type="Proteomes" id="UP000000580">
    <property type="component" value="Chromosome"/>
</dbReference>
<dbReference type="GO" id="GO:0005829">
    <property type="term" value="C:cytosol"/>
    <property type="evidence" value="ECO:0007669"/>
    <property type="project" value="TreeGrafter"/>
</dbReference>
<dbReference type="GO" id="GO:0005525">
    <property type="term" value="F:GTP binding"/>
    <property type="evidence" value="ECO:0007669"/>
    <property type="project" value="UniProtKB-UniRule"/>
</dbReference>
<dbReference type="GO" id="GO:0030145">
    <property type="term" value="F:manganese ion binding"/>
    <property type="evidence" value="ECO:0007669"/>
    <property type="project" value="UniProtKB-UniRule"/>
</dbReference>
<dbReference type="GO" id="GO:0004613">
    <property type="term" value="F:phosphoenolpyruvate carboxykinase (GTP) activity"/>
    <property type="evidence" value="ECO:0007669"/>
    <property type="project" value="UniProtKB-UniRule"/>
</dbReference>
<dbReference type="GO" id="GO:0071333">
    <property type="term" value="P:cellular response to glucose stimulus"/>
    <property type="evidence" value="ECO:0007669"/>
    <property type="project" value="TreeGrafter"/>
</dbReference>
<dbReference type="GO" id="GO:0006094">
    <property type="term" value="P:gluconeogenesis"/>
    <property type="evidence" value="ECO:0007669"/>
    <property type="project" value="UniProtKB-UniRule"/>
</dbReference>
<dbReference type="GO" id="GO:0046327">
    <property type="term" value="P:glycerol biosynthetic process from pyruvate"/>
    <property type="evidence" value="ECO:0007669"/>
    <property type="project" value="TreeGrafter"/>
</dbReference>
<dbReference type="GO" id="GO:0006107">
    <property type="term" value="P:oxaloacetate metabolic process"/>
    <property type="evidence" value="ECO:0007669"/>
    <property type="project" value="TreeGrafter"/>
</dbReference>
<dbReference type="GO" id="GO:0019543">
    <property type="term" value="P:propionate catabolic process"/>
    <property type="evidence" value="ECO:0007669"/>
    <property type="project" value="TreeGrafter"/>
</dbReference>
<dbReference type="GO" id="GO:0033993">
    <property type="term" value="P:response to lipid"/>
    <property type="evidence" value="ECO:0007669"/>
    <property type="project" value="TreeGrafter"/>
</dbReference>
<dbReference type="GO" id="GO:0042594">
    <property type="term" value="P:response to starvation"/>
    <property type="evidence" value="ECO:0007669"/>
    <property type="project" value="TreeGrafter"/>
</dbReference>
<dbReference type="CDD" id="cd00819">
    <property type="entry name" value="PEPCK_GTP"/>
    <property type="match status" value="1"/>
</dbReference>
<dbReference type="FunFam" id="3.40.449.10:FF:000005">
    <property type="entry name" value="Phosphoenolpyruvate carboxykinase [GTP]"/>
    <property type="match status" value="1"/>
</dbReference>
<dbReference type="Gene3D" id="3.90.228.20">
    <property type="match status" value="1"/>
</dbReference>
<dbReference type="Gene3D" id="3.40.449.10">
    <property type="entry name" value="Phosphoenolpyruvate Carboxykinase, domain 1"/>
    <property type="match status" value="1"/>
</dbReference>
<dbReference type="Gene3D" id="2.170.8.10">
    <property type="entry name" value="Phosphoenolpyruvate Carboxykinase, domain 2"/>
    <property type="match status" value="1"/>
</dbReference>
<dbReference type="HAMAP" id="MF_00452">
    <property type="entry name" value="PEPCK_GTP"/>
    <property type="match status" value="1"/>
</dbReference>
<dbReference type="InterPro" id="IPR018091">
    <property type="entry name" value="PEP_carboxykin_GTP_CS"/>
</dbReference>
<dbReference type="InterPro" id="IPR013035">
    <property type="entry name" value="PEP_carboxykinase_C"/>
</dbReference>
<dbReference type="InterPro" id="IPR008209">
    <property type="entry name" value="PEP_carboxykinase_GTP"/>
</dbReference>
<dbReference type="InterPro" id="IPR035077">
    <property type="entry name" value="PEP_carboxykinase_GTP_C"/>
</dbReference>
<dbReference type="InterPro" id="IPR035078">
    <property type="entry name" value="PEP_carboxykinase_GTP_N"/>
</dbReference>
<dbReference type="InterPro" id="IPR008210">
    <property type="entry name" value="PEP_carboxykinase_N"/>
</dbReference>
<dbReference type="NCBIfam" id="NF003253">
    <property type="entry name" value="PRK04210.1"/>
    <property type="match status" value="1"/>
</dbReference>
<dbReference type="PANTHER" id="PTHR11561">
    <property type="entry name" value="PHOSPHOENOLPYRUVATE CARBOXYKINASE"/>
    <property type="match status" value="1"/>
</dbReference>
<dbReference type="PANTHER" id="PTHR11561:SF0">
    <property type="entry name" value="PHOSPHOENOLPYRUVATE CARBOXYKINASE [GTP]-RELATED"/>
    <property type="match status" value="1"/>
</dbReference>
<dbReference type="Pfam" id="PF00821">
    <property type="entry name" value="PEPCK_GTP"/>
    <property type="match status" value="1"/>
</dbReference>
<dbReference type="Pfam" id="PF17297">
    <property type="entry name" value="PEPCK_N"/>
    <property type="match status" value="1"/>
</dbReference>
<dbReference type="PIRSF" id="PIRSF001348">
    <property type="entry name" value="PEP_carboxykinase_GTP"/>
    <property type="match status" value="1"/>
</dbReference>
<dbReference type="SUPFAM" id="SSF68923">
    <property type="entry name" value="PEP carboxykinase N-terminal domain"/>
    <property type="match status" value="1"/>
</dbReference>
<dbReference type="SUPFAM" id="SSF53795">
    <property type="entry name" value="PEP carboxykinase-like"/>
    <property type="match status" value="1"/>
</dbReference>
<dbReference type="PROSITE" id="PS00505">
    <property type="entry name" value="PEPCK_GTP"/>
    <property type="match status" value="1"/>
</dbReference>